<comment type="function">
    <text evidence="1">Catalyzes amidations at positions B, D, E, and G on adenosylcobyrinic A,C-diamide. NH(2) groups are provided by glutamine, and one molecule of ATP is hydrogenolyzed for each amidation.</text>
</comment>
<comment type="pathway">
    <text evidence="1">Cofactor biosynthesis; adenosylcobalamin biosynthesis.</text>
</comment>
<comment type="similarity">
    <text evidence="1">Belongs to the CobB/CobQ family. CobQ subfamily.</text>
</comment>
<organism>
    <name type="scientific">Rhizobium meliloti (strain 1021)</name>
    <name type="common">Ensifer meliloti</name>
    <name type="synonym">Sinorhizobium meliloti</name>
    <dbReference type="NCBI Taxonomy" id="266834"/>
    <lineage>
        <taxon>Bacteria</taxon>
        <taxon>Pseudomonadati</taxon>
        <taxon>Pseudomonadota</taxon>
        <taxon>Alphaproteobacteria</taxon>
        <taxon>Hyphomicrobiales</taxon>
        <taxon>Rhizobiaceae</taxon>
        <taxon>Sinorhizobium/Ensifer group</taxon>
        <taxon>Sinorhizobium</taxon>
    </lineage>
</organism>
<name>COBQ_RHIME</name>
<accession>Q92P31</accession>
<sequence length="484" mass="51305">MTRKIMLQGTGSDVGKSVLVAGLCRLASNHGLSVKPFKPQNMSNNAAVADDGGEIGRAQWLQALAARVPSSVHMNPVLLKPQTDVGSQVVVQGRVAGQAKGKEYQALKPSLLGSVMESFEQVSAGADLVIVEGAGSPAEINLRAGDIANMGFATRADVPVVLVGDIDRGGVIASLVGTHAILPGDDRRMVTGYLINKFRGDVTLFDDGIASVRQFTGWPCFGVVPWLKSAGRLPAEDSVVLERLTRGGGKALKVAVPVLSRIANFDDLDPLAAEPDVDIVFVRPGTPLPDDAGLIVIPGSKSTIADLDDFRRQGWDRDLDRHMRRGGRVVGICGGYQMLGSRVADPLGIEGGKREIEGLGLLSVETEMAPEKTVRNSRAWSREYDVALEGYEIHLGKTTGADCSRAPVEIDGRPDGAMSADGRVMGTYLHGLFGSDAYRSALLKSFGIEGGGGNYRRSVDAALDEIALELETVLDRAWLGTLLG</sequence>
<evidence type="ECO:0000255" key="1">
    <source>
        <dbReference type="HAMAP-Rule" id="MF_00028"/>
    </source>
</evidence>
<proteinExistence type="inferred from homology"/>
<keyword id="KW-0169">Cobalamin biosynthesis</keyword>
<keyword id="KW-0315">Glutamine amidotransferase</keyword>
<keyword id="KW-1185">Reference proteome</keyword>
<feature type="chain" id="PRO_0000141326" description="Cobyric acid synthase">
    <location>
        <begin position="1"/>
        <end position="484"/>
    </location>
</feature>
<feature type="domain" description="GATase cobBQ-type" evidence="1">
    <location>
        <begin position="251"/>
        <end position="438"/>
    </location>
</feature>
<feature type="active site" description="Nucleophile" evidence="1">
    <location>
        <position position="333"/>
    </location>
</feature>
<feature type="active site" evidence="1">
    <location>
        <position position="430"/>
    </location>
</feature>
<dbReference type="EMBL" id="AL591688">
    <property type="protein sequence ID" value="CAC46542.1"/>
    <property type="molecule type" value="Genomic_DNA"/>
</dbReference>
<dbReference type="RefSeq" id="NP_386069.1">
    <property type="nucleotide sequence ID" value="NC_003047.1"/>
</dbReference>
<dbReference type="RefSeq" id="WP_010969599.1">
    <property type="nucleotide sequence ID" value="NC_003047.1"/>
</dbReference>
<dbReference type="SMR" id="Q92P31"/>
<dbReference type="EnsemblBacteria" id="CAC46542">
    <property type="protein sequence ID" value="CAC46542"/>
    <property type="gene ID" value="SMc04309"/>
</dbReference>
<dbReference type="KEGG" id="sme:SMc04309"/>
<dbReference type="PATRIC" id="fig|266834.11.peg.3412"/>
<dbReference type="eggNOG" id="COG1492">
    <property type="taxonomic scope" value="Bacteria"/>
</dbReference>
<dbReference type="HOGENOM" id="CLU_019250_2_2_5"/>
<dbReference type="OrthoDB" id="9808302at2"/>
<dbReference type="UniPathway" id="UPA00148"/>
<dbReference type="Proteomes" id="UP000001976">
    <property type="component" value="Chromosome"/>
</dbReference>
<dbReference type="GO" id="GO:0015420">
    <property type="term" value="F:ABC-type vitamin B12 transporter activity"/>
    <property type="evidence" value="ECO:0007669"/>
    <property type="project" value="UniProtKB-UniRule"/>
</dbReference>
<dbReference type="GO" id="GO:0003824">
    <property type="term" value="F:catalytic activity"/>
    <property type="evidence" value="ECO:0007669"/>
    <property type="project" value="InterPro"/>
</dbReference>
<dbReference type="GO" id="GO:0009236">
    <property type="term" value="P:cobalamin biosynthetic process"/>
    <property type="evidence" value="ECO:0007669"/>
    <property type="project" value="UniProtKB-UniRule"/>
</dbReference>
<dbReference type="CDD" id="cd05389">
    <property type="entry name" value="CobQ_N"/>
    <property type="match status" value="1"/>
</dbReference>
<dbReference type="CDD" id="cd01750">
    <property type="entry name" value="GATase1_CobQ"/>
    <property type="match status" value="1"/>
</dbReference>
<dbReference type="Gene3D" id="3.40.50.880">
    <property type="match status" value="1"/>
</dbReference>
<dbReference type="Gene3D" id="3.40.50.300">
    <property type="entry name" value="P-loop containing nucleotide triphosphate hydrolases"/>
    <property type="match status" value="1"/>
</dbReference>
<dbReference type="HAMAP" id="MF_00028">
    <property type="entry name" value="CobQ"/>
    <property type="match status" value="1"/>
</dbReference>
<dbReference type="InterPro" id="IPR029062">
    <property type="entry name" value="Class_I_gatase-like"/>
</dbReference>
<dbReference type="InterPro" id="IPR002586">
    <property type="entry name" value="CobQ/CobB/MinD/ParA_Nub-bd_dom"/>
</dbReference>
<dbReference type="InterPro" id="IPR033949">
    <property type="entry name" value="CobQ_GATase1"/>
</dbReference>
<dbReference type="InterPro" id="IPR047045">
    <property type="entry name" value="CobQ_N"/>
</dbReference>
<dbReference type="InterPro" id="IPR004459">
    <property type="entry name" value="CobQ_synth"/>
</dbReference>
<dbReference type="InterPro" id="IPR011698">
    <property type="entry name" value="GATase_3"/>
</dbReference>
<dbReference type="InterPro" id="IPR027417">
    <property type="entry name" value="P-loop_NTPase"/>
</dbReference>
<dbReference type="NCBIfam" id="TIGR00313">
    <property type="entry name" value="cobQ"/>
    <property type="match status" value="1"/>
</dbReference>
<dbReference type="NCBIfam" id="NF001989">
    <property type="entry name" value="PRK00784.1"/>
    <property type="match status" value="1"/>
</dbReference>
<dbReference type="PANTHER" id="PTHR21343:SF1">
    <property type="entry name" value="COBYRIC ACID SYNTHASE"/>
    <property type="match status" value="1"/>
</dbReference>
<dbReference type="PANTHER" id="PTHR21343">
    <property type="entry name" value="DETHIOBIOTIN SYNTHETASE"/>
    <property type="match status" value="1"/>
</dbReference>
<dbReference type="Pfam" id="PF01656">
    <property type="entry name" value="CbiA"/>
    <property type="match status" value="1"/>
</dbReference>
<dbReference type="Pfam" id="PF07685">
    <property type="entry name" value="GATase_3"/>
    <property type="match status" value="1"/>
</dbReference>
<dbReference type="SUPFAM" id="SSF52317">
    <property type="entry name" value="Class I glutamine amidotransferase-like"/>
    <property type="match status" value="1"/>
</dbReference>
<dbReference type="SUPFAM" id="SSF52540">
    <property type="entry name" value="P-loop containing nucleoside triphosphate hydrolases"/>
    <property type="match status" value="1"/>
</dbReference>
<dbReference type="PROSITE" id="PS51274">
    <property type="entry name" value="GATASE_COBBQ"/>
    <property type="match status" value="1"/>
</dbReference>
<gene>
    <name evidence="1" type="primary">cobQ</name>
    <name type="ordered locus">R01963</name>
    <name type="ORF">SMc04309</name>
</gene>
<protein>
    <recommendedName>
        <fullName evidence="1">Cobyric acid synthase</fullName>
    </recommendedName>
</protein>
<reference key="1">
    <citation type="journal article" date="2001" name="Proc. Natl. Acad. Sci. U.S.A.">
        <title>Analysis of the chromosome sequence of the legume symbiont Sinorhizobium meliloti strain 1021.</title>
        <authorList>
            <person name="Capela D."/>
            <person name="Barloy-Hubler F."/>
            <person name="Gouzy J."/>
            <person name="Bothe G."/>
            <person name="Ampe F."/>
            <person name="Batut J."/>
            <person name="Boistard P."/>
            <person name="Becker A."/>
            <person name="Boutry M."/>
            <person name="Cadieu E."/>
            <person name="Dreano S."/>
            <person name="Gloux S."/>
            <person name="Godrie T."/>
            <person name="Goffeau A."/>
            <person name="Kahn D."/>
            <person name="Kiss E."/>
            <person name="Lelaure V."/>
            <person name="Masuy D."/>
            <person name="Pohl T."/>
            <person name="Portetelle D."/>
            <person name="Puehler A."/>
            <person name="Purnelle B."/>
            <person name="Ramsperger U."/>
            <person name="Renard C."/>
            <person name="Thebault P."/>
            <person name="Vandenbol M."/>
            <person name="Weidner S."/>
            <person name="Galibert F."/>
        </authorList>
    </citation>
    <scope>NUCLEOTIDE SEQUENCE [LARGE SCALE GENOMIC DNA]</scope>
    <source>
        <strain>1021</strain>
    </source>
</reference>
<reference key="2">
    <citation type="journal article" date="2001" name="Science">
        <title>The composite genome of the legume symbiont Sinorhizobium meliloti.</title>
        <authorList>
            <person name="Galibert F."/>
            <person name="Finan T.M."/>
            <person name="Long S.R."/>
            <person name="Puehler A."/>
            <person name="Abola P."/>
            <person name="Ampe F."/>
            <person name="Barloy-Hubler F."/>
            <person name="Barnett M.J."/>
            <person name="Becker A."/>
            <person name="Boistard P."/>
            <person name="Bothe G."/>
            <person name="Boutry M."/>
            <person name="Bowser L."/>
            <person name="Buhrmester J."/>
            <person name="Cadieu E."/>
            <person name="Capela D."/>
            <person name="Chain P."/>
            <person name="Cowie A."/>
            <person name="Davis R.W."/>
            <person name="Dreano S."/>
            <person name="Federspiel N.A."/>
            <person name="Fisher R.F."/>
            <person name="Gloux S."/>
            <person name="Godrie T."/>
            <person name="Goffeau A."/>
            <person name="Golding B."/>
            <person name="Gouzy J."/>
            <person name="Gurjal M."/>
            <person name="Hernandez-Lucas I."/>
            <person name="Hong A."/>
            <person name="Huizar L."/>
            <person name="Hyman R.W."/>
            <person name="Jones T."/>
            <person name="Kahn D."/>
            <person name="Kahn M.L."/>
            <person name="Kalman S."/>
            <person name="Keating D.H."/>
            <person name="Kiss E."/>
            <person name="Komp C."/>
            <person name="Lelaure V."/>
            <person name="Masuy D."/>
            <person name="Palm C."/>
            <person name="Peck M.C."/>
            <person name="Pohl T.M."/>
            <person name="Portetelle D."/>
            <person name="Purnelle B."/>
            <person name="Ramsperger U."/>
            <person name="Surzycki R."/>
            <person name="Thebault P."/>
            <person name="Vandenbol M."/>
            <person name="Vorhoelter F.J."/>
            <person name="Weidner S."/>
            <person name="Wells D.H."/>
            <person name="Wong K."/>
            <person name="Yeh K.-C."/>
            <person name="Batut J."/>
        </authorList>
    </citation>
    <scope>NUCLEOTIDE SEQUENCE [LARGE SCALE GENOMIC DNA]</scope>
    <source>
        <strain>1021</strain>
    </source>
</reference>